<organism>
    <name type="scientific">Citrobacter koseri (strain ATCC BAA-895 / CDC 4225-83 / SGSC4696)</name>
    <dbReference type="NCBI Taxonomy" id="290338"/>
    <lineage>
        <taxon>Bacteria</taxon>
        <taxon>Pseudomonadati</taxon>
        <taxon>Pseudomonadota</taxon>
        <taxon>Gammaproteobacteria</taxon>
        <taxon>Enterobacterales</taxon>
        <taxon>Enterobacteriaceae</taxon>
        <taxon>Citrobacter</taxon>
    </lineage>
</organism>
<reference key="1">
    <citation type="submission" date="2007-08" db="EMBL/GenBank/DDBJ databases">
        <authorList>
            <consortium name="The Citrobacter koseri Genome Sequencing Project"/>
            <person name="McClelland M."/>
            <person name="Sanderson E.K."/>
            <person name="Porwollik S."/>
            <person name="Spieth J."/>
            <person name="Clifton W.S."/>
            <person name="Latreille P."/>
            <person name="Courtney L."/>
            <person name="Wang C."/>
            <person name="Pepin K."/>
            <person name="Bhonagiri V."/>
            <person name="Nash W."/>
            <person name="Johnson M."/>
            <person name="Thiruvilangam P."/>
            <person name="Wilson R."/>
        </authorList>
    </citation>
    <scope>NUCLEOTIDE SEQUENCE [LARGE SCALE GENOMIC DNA]</scope>
    <source>
        <strain>ATCC BAA-895 / CDC 4225-83 / SGSC4696</strain>
    </source>
</reference>
<accession>A8AQD5</accession>
<evidence type="ECO:0000255" key="1">
    <source>
        <dbReference type="HAMAP-Rule" id="MF_01544"/>
    </source>
</evidence>
<protein>
    <recommendedName>
        <fullName evidence="1">p-hydroxybenzoic acid efflux pump subunit AaeA</fullName>
        <shortName evidence="1">pHBA efflux pump protein A</shortName>
    </recommendedName>
</protein>
<gene>
    <name evidence="1" type="primary">aaeA</name>
    <name type="ordered locus">CKO_04648</name>
</gene>
<feature type="chain" id="PRO_1000068801" description="p-hydroxybenzoic acid efflux pump subunit AaeA">
    <location>
        <begin position="1"/>
        <end position="310"/>
    </location>
</feature>
<feature type="transmembrane region" description="Helical" evidence="1">
    <location>
        <begin position="12"/>
        <end position="32"/>
    </location>
</feature>
<comment type="function">
    <text evidence="1">Forms an efflux pump with AaeB.</text>
</comment>
<comment type="subcellular location">
    <subcellularLocation>
        <location evidence="1">Cell inner membrane</location>
        <topology evidence="1">Single-pass membrane protein</topology>
    </subcellularLocation>
</comment>
<comment type="similarity">
    <text evidence="1">Belongs to the membrane fusion protein (MFP) (TC 8.A.1) family.</text>
</comment>
<proteinExistence type="inferred from homology"/>
<name>AAEA_CITK8</name>
<keyword id="KW-0997">Cell inner membrane</keyword>
<keyword id="KW-1003">Cell membrane</keyword>
<keyword id="KW-0472">Membrane</keyword>
<keyword id="KW-1185">Reference proteome</keyword>
<keyword id="KW-0812">Transmembrane</keyword>
<keyword id="KW-1133">Transmembrane helix</keyword>
<keyword id="KW-0813">Transport</keyword>
<sequence>MKTLTRKLSRTAITLVLVILAFIAIFRAWVYYTESPWTRDARFSADVVAIAPDVAGLITNVSVHDNQLVKKDQILFTIDQPRYKKALEEAEADVAYYQVLAQEKRQEAGRRNRLGVQAMSREEIDQANNVLQTVLHQLAKAQATRDLAKLDLERTVIRAPADGWVTNLNVYTGEFITRGSTAVALVKQHSFYVLAYMEETKLEGVRPGYRAEITPLGSNKVLKGTVDSVAAGVTNASSTRDAKGMATIDSNLEWVRLAQRVPVRIRLDDQQDNLWPAGTTATVVITGKQDRDETQDSFFRKMAHRLREFG</sequence>
<dbReference type="EMBL" id="CP000822">
    <property type="protein sequence ID" value="ABV15698.1"/>
    <property type="molecule type" value="Genomic_DNA"/>
</dbReference>
<dbReference type="RefSeq" id="WP_012135375.1">
    <property type="nucleotide sequence ID" value="NC_009792.1"/>
</dbReference>
<dbReference type="SMR" id="A8AQD5"/>
<dbReference type="STRING" id="290338.CKO_04648"/>
<dbReference type="GeneID" id="45138178"/>
<dbReference type="KEGG" id="cko:CKO_04648"/>
<dbReference type="HOGENOM" id="CLU_018816_15_2_6"/>
<dbReference type="OrthoDB" id="9811754at2"/>
<dbReference type="Proteomes" id="UP000008148">
    <property type="component" value="Chromosome"/>
</dbReference>
<dbReference type="GO" id="GO:0005886">
    <property type="term" value="C:plasma membrane"/>
    <property type="evidence" value="ECO:0007669"/>
    <property type="project" value="UniProtKB-SubCell"/>
</dbReference>
<dbReference type="GO" id="GO:0022857">
    <property type="term" value="F:transmembrane transporter activity"/>
    <property type="evidence" value="ECO:0007669"/>
    <property type="project" value="UniProtKB-UniRule"/>
</dbReference>
<dbReference type="FunFam" id="2.40.30.170:FF:000002">
    <property type="entry name" value="p-hydroxybenzoic acid efflux pump subunit AaeA"/>
    <property type="match status" value="1"/>
</dbReference>
<dbReference type="Gene3D" id="2.40.30.170">
    <property type="match status" value="1"/>
</dbReference>
<dbReference type="Gene3D" id="2.40.50.100">
    <property type="match status" value="1"/>
</dbReference>
<dbReference type="HAMAP" id="MF_01544">
    <property type="entry name" value="AaeA"/>
    <property type="match status" value="1"/>
</dbReference>
<dbReference type="InterPro" id="IPR043602">
    <property type="entry name" value="CusB-like_dom_1"/>
</dbReference>
<dbReference type="InterPro" id="IPR032317">
    <property type="entry name" value="CusB_D23"/>
</dbReference>
<dbReference type="InterPro" id="IPR050393">
    <property type="entry name" value="MFP_Efflux_Pump"/>
</dbReference>
<dbReference type="InterPro" id="IPR022871">
    <property type="entry name" value="PHBA_efflux_pump_AaeA"/>
</dbReference>
<dbReference type="InterPro" id="IPR006143">
    <property type="entry name" value="RND_pump_MFP"/>
</dbReference>
<dbReference type="NCBIfam" id="NF007850">
    <property type="entry name" value="PRK10559.1"/>
    <property type="match status" value="1"/>
</dbReference>
<dbReference type="NCBIfam" id="TIGR01730">
    <property type="entry name" value="RND_mfp"/>
    <property type="match status" value="1"/>
</dbReference>
<dbReference type="PANTHER" id="PTHR30367:SF12">
    <property type="entry name" value="P-HYDROXYBENZOIC ACID EFFLUX PUMP SUBUNIT AAEA"/>
    <property type="match status" value="1"/>
</dbReference>
<dbReference type="PANTHER" id="PTHR30367">
    <property type="entry name" value="P-HYDROXYBENZOIC ACID EFFLUX PUMP SUBUNIT AAEA-RELATED"/>
    <property type="match status" value="1"/>
</dbReference>
<dbReference type="Pfam" id="PF00529">
    <property type="entry name" value="CusB_dom_1"/>
    <property type="match status" value="1"/>
</dbReference>
<dbReference type="Pfam" id="PF16576">
    <property type="entry name" value="HlyD_D23"/>
    <property type="match status" value="1"/>
</dbReference>
<dbReference type="SUPFAM" id="SSF111369">
    <property type="entry name" value="HlyD-like secretion proteins"/>
    <property type="match status" value="1"/>
</dbReference>